<dbReference type="EMBL" id="AE017198">
    <property type="protein sequence ID" value="AAS08684.1"/>
    <property type="molecule type" value="Genomic_DNA"/>
</dbReference>
<dbReference type="RefSeq" id="WP_011161781.1">
    <property type="nucleotide sequence ID" value="NC_005362.1"/>
</dbReference>
<dbReference type="SMR" id="Q74K90"/>
<dbReference type="KEGG" id="ljo:LJ_0863"/>
<dbReference type="PATRIC" id="fig|257314.6.peg.720"/>
<dbReference type="eggNOG" id="COG0556">
    <property type="taxonomic scope" value="Bacteria"/>
</dbReference>
<dbReference type="HOGENOM" id="CLU_009621_2_1_9"/>
<dbReference type="Proteomes" id="UP000000581">
    <property type="component" value="Chromosome"/>
</dbReference>
<dbReference type="GO" id="GO:0005737">
    <property type="term" value="C:cytoplasm"/>
    <property type="evidence" value="ECO:0007669"/>
    <property type="project" value="UniProtKB-SubCell"/>
</dbReference>
<dbReference type="GO" id="GO:0009380">
    <property type="term" value="C:excinuclease repair complex"/>
    <property type="evidence" value="ECO:0007669"/>
    <property type="project" value="InterPro"/>
</dbReference>
<dbReference type="GO" id="GO:0005524">
    <property type="term" value="F:ATP binding"/>
    <property type="evidence" value="ECO:0007669"/>
    <property type="project" value="UniProtKB-UniRule"/>
</dbReference>
<dbReference type="GO" id="GO:0016887">
    <property type="term" value="F:ATP hydrolysis activity"/>
    <property type="evidence" value="ECO:0007669"/>
    <property type="project" value="InterPro"/>
</dbReference>
<dbReference type="GO" id="GO:0003677">
    <property type="term" value="F:DNA binding"/>
    <property type="evidence" value="ECO:0007669"/>
    <property type="project" value="UniProtKB-UniRule"/>
</dbReference>
<dbReference type="GO" id="GO:0009381">
    <property type="term" value="F:excinuclease ABC activity"/>
    <property type="evidence" value="ECO:0007669"/>
    <property type="project" value="UniProtKB-UniRule"/>
</dbReference>
<dbReference type="GO" id="GO:0006289">
    <property type="term" value="P:nucleotide-excision repair"/>
    <property type="evidence" value="ECO:0007669"/>
    <property type="project" value="UniProtKB-UniRule"/>
</dbReference>
<dbReference type="GO" id="GO:0009432">
    <property type="term" value="P:SOS response"/>
    <property type="evidence" value="ECO:0007669"/>
    <property type="project" value="UniProtKB-UniRule"/>
</dbReference>
<dbReference type="CDD" id="cd17916">
    <property type="entry name" value="DEXHc_UvrB"/>
    <property type="match status" value="1"/>
</dbReference>
<dbReference type="CDD" id="cd18790">
    <property type="entry name" value="SF2_C_UvrB"/>
    <property type="match status" value="1"/>
</dbReference>
<dbReference type="Gene3D" id="3.40.50.300">
    <property type="entry name" value="P-loop containing nucleotide triphosphate hydrolases"/>
    <property type="match status" value="3"/>
</dbReference>
<dbReference type="Gene3D" id="4.10.860.10">
    <property type="entry name" value="UVR domain"/>
    <property type="match status" value="1"/>
</dbReference>
<dbReference type="HAMAP" id="MF_00204">
    <property type="entry name" value="UvrB"/>
    <property type="match status" value="1"/>
</dbReference>
<dbReference type="InterPro" id="IPR006935">
    <property type="entry name" value="Helicase/UvrB_N"/>
</dbReference>
<dbReference type="InterPro" id="IPR014001">
    <property type="entry name" value="Helicase_ATP-bd"/>
</dbReference>
<dbReference type="InterPro" id="IPR001650">
    <property type="entry name" value="Helicase_C-like"/>
</dbReference>
<dbReference type="InterPro" id="IPR027417">
    <property type="entry name" value="P-loop_NTPase"/>
</dbReference>
<dbReference type="InterPro" id="IPR001943">
    <property type="entry name" value="UVR_dom"/>
</dbReference>
<dbReference type="InterPro" id="IPR036876">
    <property type="entry name" value="UVR_dom_sf"/>
</dbReference>
<dbReference type="InterPro" id="IPR004807">
    <property type="entry name" value="UvrB"/>
</dbReference>
<dbReference type="InterPro" id="IPR041471">
    <property type="entry name" value="UvrB_inter"/>
</dbReference>
<dbReference type="InterPro" id="IPR024759">
    <property type="entry name" value="UvrB_YAD/RRR_dom"/>
</dbReference>
<dbReference type="NCBIfam" id="NF003673">
    <property type="entry name" value="PRK05298.1"/>
    <property type="match status" value="1"/>
</dbReference>
<dbReference type="NCBIfam" id="TIGR00631">
    <property type="entry name" value="uvrb"/>
    <property type="match status" value="1"/>
</dbReference>
<dbReference type="PANTHER" id="PTHR24029">
    <property type="entry name" value="UVRABC SYSTEM PROTEIN B"/>
    <property type="match status" value="1"/>
</dbReference>
<dbReference type="PANTHER" id="PTHR24029:SF0">
    <property type="entry name" value="UVRABC SYSTEM PROTEIN B"/>
    <property type="match status" value="1"/>
</dbReference>
<dbReference type="Pfam" id="PF00271">
    <property type="entry name" value="Helicase_C"/>
    <property type="match status" value="1"/>
</dbReference>
<dbReference type="Pfam" id="PF04851">
    <property type="entry name" value="ResIII"/>
    <property type="match status" value="1"/>
</dbReference>
<dbReference type="Pfam" id="PF02151">
    <property type="entry name" value="UVR"/>
    <property type="match status" value="1"/>
</dbReference>
<dbReference type="Pfam" id="PF12344">
    <property type="entry name" value="UvrB"/>
    <property type="match status" value="1"/>
</dbReference>
<dbReference type="Pfam" id="PF17757">
    <property type="entry name" value="UvrB_inter"/>
    <property type="match status" value="1"/>
</dbReference>
<dbReference type="SMART" id="SM00487">
    <property type="entry name" value="DEXDc"/>
    <property type="match status" value="1"/>
</dbReference>
<dbReference type="SMART" id="SM00490">
    <property type="entry name" value="HELICc"/>
    <property type="match status" value="1"/>
</dbReference>
<dbReference type="SUPFAM" id="SSF46600">
    <property type="entry name" value="C-terminal UvrC-binding domain of UvrB"/>
    <property type="match status" value="1"/>
</dbReference>
<dbReference type="SUPFAM" id="SSF52540">
    <property type="entry name" value="P-loop containing nucleoside triphosphate hydrolases"/>
    <property type="match status" value="2"/>
</dbReference>
<dbReference type="PROSITE" id="PS51192">
    <property type="entry name" value="HELICASE_ATP_BIND_1"/>
    <property type="match status" value="1"/>
</dbReference>
<dbReference type="PROSITE" id="PS51194">
    <property type="entry name" value="HELICASE_CTER"/>
    <property type="match status" value="1"/>
</dbReference>
<dbReference type="PROSITE" id="PS50151">
    <property type="entry name" value="UVR"/>
    <property type="match status" value="1"/>
</dbReference>
<protein>
    <recommendedName>
        <fullName evidence="1">UvrABC system protein B</fullName>
        <shortName evidence="1">Protein UvrB</shortName>
    </recommendedName>
    <alternativeName>
        <fullName evidence="1">Excinuclease ABC subunit B</fullName>
    </alternativeName>
</protein>
<reference key="1">
    <citation type="journal article" date="2004" name="Proc. Natl. Acad. Sci. U.S.A.">
        <title>The genome sequence of the probiotic intestinal bacterium Lactobacillus johnsonii NCC 533.</title>
        <authorList>
            <person name="Pridmore R.D."/>
            <person name="Berger B."/>
            <person name="Desiere F."/>
            <person name="Vilanova D."/>
            <person name="Barretto C."/>
            <person name="Pittet A.-C."/>
            <person name="Zwahlen M.-C."/>
            <person name="Rouvet M."/>
            <person name="Altermann E."/>
            <person name="Barrangou R."/>
            <person name="Mollet B."/>
            <person name="Mercenier A."/>
            <person name="Klaenhammer T."/>
            <person name="Arigoni F."/>
            <person name="Schell M.A."/>
        </authorList>
    </citation>
    <scope>NUCLEOTIDE SEQUENCE [LARGE SCALE GENOMIC DNA]</scope>
    <source>
        <strain>CNCM I-1225 / La1 / NCC 533</strain>
    </source>
</reference>
<feature type="chain" id="PRO_0000227322" description="UvrABC system protein B">
    <location>
        <begin position="1"/>
        <end position="671"/>
    </location>
</feature>
<feature type="domain" description="Helicase ATP-binding" evidence="1">
    <location>
        <begin position="31"/>
        <end position="414"/>
    </location>
</feature>
<feature type="domain" description="Helicase C-terminal" evidence="1">
    <location>
        <begin position="435"/>
        <end position="601"/>
    </location>
</feature>
<feature type="domain" description="UVR" evidence="1">
    <location>
        <begin position="630"/>
        <end position="665"/>
    </location>
</feature>
<feature type="short sequence motif" description="Beta-hairpin">
    <location>
        <begin position="97"/>
        <end position="120"/>
    </location>
</feature>
<feature type="binding site" evidence="1">
    <location>
        <begin position="44"/>
        <end position="51"/>
    </location>
    <ligand>
        <name>ATP</name>
        <dbReference type="ChEBI" id="CHEBI:30616"/>
    </ligand>
</feature>
<sequence>MIRRQKNKKFELVSKFQPAGDQEQAIKKLTDGFEQGEKAQILEGATGTGKTFTMANVIAKLNKPTLVISHNKTLVGQLYGEFKEFFPKNAVDYFVSYYDYYQPEAYVPQSDTYIEKDSSINDEIDQLRHKTTSDLMSRNDVIVVASVSCIYGLGDPREYAASVVSLSEGQEISRDVLLRDLVNIQYDRNDIDFQRGRFRVRGDVVEIFPAGYSDHAFRVEFFGDEIDRIVEVDSLTGEVIGEREQVSIFPATHFVTNEQIMERALASIKDEMNIQVKKFEGEGKLLEAQRIKQRTTYDMEMMSEVGYTNGIENYSRHMEGRKAGQPPHTLLDFFPDDFLILIDESHATMPELKAMYNGDRARKQTLIDYGFRLPSALDNRPLKLEEFEKHVNQIMYVSATPGDYELNQTDHKVEQIIRPTGLLDPEIEVRPIKGQIDDLVGEVNKRIERNERVFVTTLTKKMAEDLTDYLKDLGIKVRYLHSDIKTLERLEIIRDLRLGKFDVLIGINLLREGIDVPEVSLVAILDADKEGFLRSTRPLVQTIGRAARNSNGKVIMYADSITDSMREAIDATERRRSLQMKFNKEHGITPKTIVKPIRDVISITKDSEDKENKESFADLNFDELTKKQKQNMIKTLTAQMQEAAKKLDFEEAANLRDAIMDLKKQVHEKKK</sequence>
<comment type="function">
    <text evidence="1">The UvrABC repair system catalyzes the recognition and processing of DNA lesions. A damage recognition complex composed of 2 UvrA and 2 UvrB subunits scans DNA for abnormalities. Upon binding of the UvrA(2)B(2) complex to a putative damaged site, the DNA wraps around one UvrB monomer. DNA wrap is dependent on ATP binding by UvrB and probably causes local melting of the DNA helix, facilitating insertion of UvrB beta-hairpin between the DNA strands. Then UvrB probes one DNA strand for the presence of a lesion. If a lesion is found the UvrA subunits dissociate and the UvrB-DNA preincision complex is formed. This complex is subsequently bound by UvrC and the second UvrB is released. If no lesion is found, the DNA wraps around the other UvrB subunit that will check the other stand for damage.</text>
</comment>
<comment type="subunit">
    <text evidence="1">Forms a heterotetramer with UvrA during the search for lesions. Interacts with UvrC in an incision complex.</text>
</comment>
<comment type="subcellular location">
    <subcellularLocation>
        <location evidence="1">Cytoplasm</location>
    </subcellularLocation>
</comment>
<comment type="domain">
    <text evidence="1">The beta-hairpin motif is involved in DNA binding.</text>
</comment>
<comment type="similarity">
    <text evidence="1">Belongs to the UvrB family.</text>
</comment>
<organism>
    <name type="scientific">Lactobacillus johnsonii (strain CNCM I-12250 / La1 / NCC 533)</name>
    <dbReference type="NCBI Taxonomy" id="257314"/>
    <lineage>
        <taxon>Bacteria</taxon>
        <taxon>Bacillati</taxon>
        <taxon>Bacillota</taxon>
        <taxon>Bacilli</taxon>
        <taxon>Lactobacillales</taxon>
        <taxon>Lactobacillaceae</taxon>
        <taxon>Lactobacillus</taxon>
    </lineage>
</organism>
<gene>
    <name evidence="1" type="primary">uvrB</name>
    <name type="ordered locus">LJ_0863</name>
</gene>
<name>UVRB_LACJO</name>
<accession>Q74K90</accession>
<proteinExistence type="inferred from homology"/>
<evidence type="ECO:0000255" key="1">
    <source>
        <dbReference type="HAMAP-Rule" id="MF_00204"/>
    </source>
</evidence>
<keyword id="KW-0067">ATP-binding</keyword>
<keyword id="KW-0963">Cytoplasm</keyword>
<keyword id="KW-0227">DNA damage</keyword>
<keyword id="KW-0228">DNA excision</keyword>
<keyword id="KW-0234">DNA repair</keyword>
<keyword id="KW-0267">Excision nuclease</keyword>
<keyword id="KW-0547">Nucleotide-binding</keyword>
<keyword id="KW-0742">SOS response</keyword>